<accession>Q8FP00</accession>
<comment type="function">
    <text evidence="1">Catalyzes the hydrolysis of the adenine ring of phosphoribosyl-AMP.</text>
</comment>
<comment type="catalytic activity">
    <reaction evidence="1">
        <text>1-(5-phospho-beta-D-ribosyl)-5'-AMP + H2O = 1-(5-phospho-beta-D-ribosyl)-5-[(5-phospho-beta-D-ribosylamino)methylideneamino]imidazole-4-carboxamide</text>
        <dbReference type="Rhea" id="RHEA:20049"/>
        <dbReference type="ChEBI" id="CHEBI:15377"/>
        <dbReference type="ChEBI" id="CHEBI:58435"/>
        <dbReference type="ChEBI" id="CHEBI:59457"/>
        <dbReference type="EC" id="3.5.4.19"/>
    </reaction>
</comment>
<comment type="cofactor">
    <cofactor evidence="1">
        <name>Mg(2+)</name>
        <dbReference type="ChEBI" id="CHEBI:18420"/>
    </cofactor>
    <text evidence="1">Binds 1 Mg(2+) ion per subunit.</text>
</comment>
<comment type="cofactor">
    <cofactor evidence="1">
        <name>Zn(2+)</name>
        <dbReference type="ChEBI" id="CHEBI:29105"/>
    </cofactor>
    <text evidence="1">Binds 1 zinc ion per subunit.</text>
</comment>
<comment type="pathway">
    <text evidence="1">Amino-acid biosynthesis; L-histidine biosynthesis; L-histidine from 5-phospho-alpha-D-ribose 1-diphosphate: step 3/9.</text>
</comment>
<comment type="subunit">
    <text evidence="1">Homodimer.</text>
</comment>
<comment type="subcellular location">
    <subcellularLocation>
        <location evidence="1">Cytoplasm</location>
    </subcellularLocation>
</comment>
<comment type="similarity">
    <text evidence="1">Belongs to the PRA-CH family.</text>
</comment>
<reference key="1">
    <citation type="journal article" date="2003" name="Genome Res.">
        <title>Comparative complete genome sequence analysis of the amino acid replacements responsible for the thermostability of Corynebacterium efficiens.</title>
        <authorList>
            <person name="Nishio Y."/>
            <person name="Nakamura Y."/>
            <person name="Kawarabayasi Y."/>
            <person name="Usuda Y."/>
            <person name="Kimura E."/>
            <person name="Sugimoto S."/>
            <person name="Matsui K."/>
            <person name="Yamagishi A."/>
            <person name="Kikuchi H."/>
            <person name="Ikeo K."/>
            <person name="Gojobori T."/>
        </authorList>
    </citation>
    <scope>NUCLEOTIDE SEQUENCE [LARGE SCALE GENOMIC DNA]</scope>
    <source>
        <strain>DSM 44549 / YS-314 / AJ 12310 / JCM 11189 / NBRC 100395</strain>
    </source>
</reference>
<name>HIS3_COREF</name>
<keyword id="KW-0028">Amino-acid biosynthesis</keyword>
<keyword id="KW-0963">Cytoplasm</keyword>
<keyword id="KW-0368">Histidine biosynthesis</keyword>
<keyword id="KW-0378">Hydrolase</keyword>
<keyword id="KW-0460">Magnesium</keyword>
<keyword id="KW-0479">Metal-binding</keyword>
<keyword id="KW-1185">Reference proteome</keyword>
<keyword id="KW-0862">Zinc</keyword>
<dbReference type="EC" id="3.5.4.19" evidence="1"/>
<dbReference type="EMBL" id="BA000035">
    <property type="protein sequence ID" value="BAC18803.1"/>
    <property type="molecule type" value="Genomic_DNA"/>
</dbReference>
<dbReference type="RefSeq" id="WP_006767991.1">
    <property type="nucleotide sequence ID" value="NC_004369.1"/>
</dbReference>
<dbReference type="SMR" id="Q8FP00"/>
<dbReference type="STRING" id="196164.gene:10742421"/>
<dbReference type="KEGG" id="cef:CE1993"/>
<dbReference type="eggNOG" id="COG0139">
    <property type="taxonomic scope" value="Bacteria"/>
</dbReference>
<dbReference type="HOGENOM" id="CLU_048577_5_1_11"/>
<dbReference type="UniPathway" id="UPA00031">
    <property type="reaction ID" value="UER00008"/>
</dbReference>
<dbReference type="Proteomes" id="UP000001409">
    <property type="component" value="Chromosome"/>
</dbReference>
<dbReference type="GO" id="GO:0005737">
    <property type="term" value="C:cytoplasm"/>
    <property type="evidence" value="ECO:0007669"/>
    <property type="project" value="UniProtKB-SubCell"/>
</dbReference>
<dbReference type="GO" id="GO:0000287">
    <property type="term" value="F:magnesium ion binding"/>
    <property type="evidence" value="ECO:0007669"/>
    <property type="project" value="UniProtKB-UniRule"/>
</dbReference>
<dbReference type="GO" id="GO:0004635">
    <property type="term" value="F:phosphoribosyl-AMP cyclohydrolase activity"/>
    <property type="evidence" value="ECO:0007669"/>
    <property type="project" value="UniProtKB-UniRule"/>
</dbReference>
<dbReference type="GO" id="GO:0008270">
    <property type="term" value="F:zinc ion binding"/>
    <property type="evidence" value="ECO:0007669"/>
    <property type="project" value="UniProtKB-UniRule"/>
</dbReference>
<dbReference type="GO" id="GO:0000105">
    <property type="term" value="P:L-histidine biosynthetic process"/>
    <property type="evidence" value="ECO:0007669"/>
    <property type="project" value="UniProtKB-UniRule"/>
</dbReference>
<dbReference type="FunFam" id="3.10.20.810:FF:000001">
    <property type="entry name" value="Histidine biosynthesis bifunctional protein HisIE"/>
    <property type="match status" value="1"/>
</dbReference>
<dbReference type="Gene3D" id="3.10.20.810">
    <property type="entry name" value="Phosphoribosyl-AMP cyclohydrolase"/>
    <property type="match status" value="1"/>
</dbReference>
<dbReference type="HAMAP" id="MF_01021">
    <property type="entry name" value="HisI"/>
    <property type="match status" value="1"/>
</dbReference>
<dbReference type="InterPro" id="IPR026660">
    <property type="entry name" value="PRA-CH"/>
</dbReference>
<dbReference type="InterPro" id="IPR002496">
    <property type="entry name" value="PRib_AMP_CycHydrolase_dom"/>
</dbReference>
<dbReference type="InterPro" id="IPR038019">
    <property type="entry name" value="PRib_AMP_CycHydrolase_sf"/>
</dbReference>
<dbReference type="NCBIfam" id="NF000768">
    <property type="entry name" value="PRK00051.1"/>
    <property type="match status" value="1"/>
</dbReference>
<dbReference type="PANTHER" id="PTHR42945">
    <property type="entry name" value="HISTIDINE BIOSYNTHESIS BIFUNCTIONAL PROTEIN"/>
    <property type="match status" value="1"/>
</dbReference>
<dbReference type="PANTHER" id="PTHR42945:SF11">
    <property type="entry name" value="PHOSPHORIBOSYL-AMP CYCLOHYDROLASE"/>
    <property type="match status" value="1"/>
</dbReference>
<dbReference type="Pfam" id="PF01502">
    <property type="entry name" value="PRA-CH"/>
    <property type="match status" value="1"/>
</dbReference>
<dbReference type="SUPFAM" id="SSF141734">
    <property type="entry name" value="HisI-like"/>
    <property type="match status" value="1"/>
</dbReference>
<organism>
    <name type="scientific">Corynebacterium efficiens (strain DSM 44549 / YS-314 / AJ 12310 / JCM 11189 / NBRC 100395)</name>
    <dbReference type="NCBI Taxonomy" id="196164"/>
    <lineage>
        <taxon>Bacteria</taxon>
        <taxon>Bacillati</taxon>
        <taxon>Actinomycetota</taxon>
        <taxon>Actinomycetes</taxon>
        <taxon>Mycobacteriales</taxon>
        <taxon>Corynebacteriaceae</taxon>
        <taxon>Corynebacterium</taxon>
    </lineage>
</organism>
<feature type="chain" id="PRO_0000136474" description="Phosphoribosyl-AMP cyclohydrolase">
    <location>
        <begin position="1"/>
        <end position="129"/>
    </location>
</feature>
<feature type="binding site" evidence="1">
    <location>
        <position position="94"/>
    </location>
    <ligand>
        <name>Mg(2+)</name>
        <dbReference type="ChEBI" id="CHEBI:18420"/>
    </ligand>
</feature>
<feature type="binding site" evidence="1">
    <location>
        <position position="95"/>
    </location>
    <ligand>
        <name>Zn(2+)</name>
        <dbReference type="ChEBI" id="CHEBI:29105"/>
        <note>ligand shared between dimeric partners</note>
    </ligand>
</feature>
<feature type="binding site" evidence="1">
    <location>
        <position position="96"/>
    </location>
    <ligand>
        <name>Mg(2+)</name>
        <dbReference type="ChEBI" id="CHEBI:18420"/>
    </ligand>
</feature>
<feature type="binding site" evidence="1">
    <location>
        <position position="98"/>
    </location>
    <ligand>
        <name>Mg(2+)</name>
        <dbReference type="ChEBI" id="CHEBI:18420"/>
    </ligand>
</feature>
<feature type="binding site" evidence="1">
    <location>
        <position position="111"/>
    </location>
    <ligand>
        <name>Zn(2+)</name>
        <dbReference type="ChEBI" id="CHEBI:29105"/>
        <note>ligand shared between dimeric partners</note>
    </ligand>
</feature>
<feature type="binding site" evidence="1">
    <location>
        <position position="118"/>
    </location>
    <ligand>
        <name>Zn(2+)</name>
        <dbReference type="ChEBI" id="CHEBI:29105"/>
        <note>ligand shared between dimeric partners</note>
    </ligand>
</feature>
<gene>
    <name evidence="1" type="primary">hisI</name>
    <name type="ordered locus">CE1993</name>
</gene>
<proteinExistence type="inferred from homology"/>
<evidence type="ECO:0000255" key="1">
    <source>
        <dbReference type="HAMAP-Rule" id="MF_01021"/>
    </source>
</evidence>
<sequence length="129" mass="13935">MSHDPTPISDNPAEFTLDPVIAARLKLNDAGLIPAVVQAVDTREVLMMAWMDTHALAYTLATRRGTYYSRSRDEYWIKGLTSGNVQEVTDVALDCDGDTVLVTVHQTGGACHTGARTCFDADPLLGPGQ</sequence>
<protein>
    <recommendedName>
        <fullName evidence="1">Phosphoribosyl-AMP cyclohydrolase</fullName>
        <shortName evidence="1">PRA-CH</shortName>
        <ecNumber evidence="1">3.5.4.19</ecNumber>
    </recommendedName>
</protein>